<gene>
    <name evidence="1" type="primary">moaA</name>
    <name type="ordered locus">Tcr_0158</name>
</gene>
<proteinExistence type="inferred from homology"/>
<feature type="chain" id="PRO_1000066813" description="GTP 3',8-cyclase">
    <location>
        <begin position="1"/>
        <end position="331"/>
    </location>
</feature>
<feature type="domain" description="Radical SAM core" evidence="2">
    <location>
        <begin position="6"/>
        <end position="234"/>
    </location>
</feature>
<feature type="binding site" evidence="1">
    <location>
        <position position="15"/>
    </location>
    <ligand>
        <name>GTP</name>
        <dbReference type="ChEBI" id="CHEBI:37565"/>
    </ligand>
</feature>
<feature type="binding site" evidence="1">
    <location>
        <position position="22"/>
    </location>
    <ligand>
        <name>[4Fe-4S] cluster</name>
        <dbReference type="ChEBI" id="CHEBI:49883"/>
        <label>1</label>
        <note>4Fe-4S-S-AdoMet</note>
    </ligand>
</feature>
<feature type="binding site" evidence="1">
    <location>
        <position position="26"/>
    </location>
    <ligand>
        <name>[4Fe-4S] cluster</name>
        <dbReference type="ChEBI" id="CHEBI:49883"/>
        <label>1</label>
        <note>4Fe-4S-S-AdoMet</note>
    </ligand>
</feature>
<feature type="binding site" evidence="1">
    <location>
        <position position="28"/>
    </location>
    <ligand>
        <name>S-adenosyl-L-methionine</name>
        <dbReference type="ChEBI" id="CHEBI:59789"/>
    </ligand>
</feature>
<feature type="binding site" evidence="1">
    <location>
        <position position="29"/>
    </location>
    <ligand>
        <name>[4Fe-4S] cluster</name>
        <dbReference type="ChEBI" id="CHEBI:49883"/>
        <label>1</label>
        <note>4Fe-4S-S-AdoMet</note>
    </ligand>
</feature>
<feature type="binding site" evidence="1">
    <location>
        <position position="66"/>
    </location>
    <ligand>
        <name>GTP</name>
        <dbReference type="ChEBI" id="CHEBI:37565"/>
    </ligand>
</feature>
<feature type="binding site" evidence="1">
    <location>
        <position position="70"/>
    </location>
    <ligand>
        <name>S-adenosyl-L-methionine</name>
        <dbReference type="ChEBI" id="CHEBI:59789"/>
    </ligand>
</feature>
<feature type="binding site" evidence="1">
    <location>
        <position position="97"/>
    </location>
    <ligand>
        <name>GTP</name>
        <dbReference type="ChEBI" id="CHEBI:37565"/>
    </ligand>
</feature>
<feature type="binding site" evidence="1">
    <location>
        <position position="121"/>
    </location>
    <ligand>
        <name>S-adenosyl-L-methionine</name>
        <dbReference type="ChEBI" id="CHEBI:59789"/>
    </ligand>
</feature>
<feature type="binding site" evidence="1">
    <location>
        <position position="158"/>
    </location>
    <ligand>
        <name>GTP</name>
        <dbReference type="ChEBI" id="CHEBI:37565"/>
    </ligand>
</feature>
<feature type="binding site" evidence="1">
    <location>
        <position position="192"/>
    </location>
    <ligand>
        <name>S-adenosyl-L-methionine</name>
        <dbReference type="ChEBI" id="CHEBI:59789"/>
    </ligand>
</feature>
<feature type="binding site" evidence="1">
    <location>
        <position position="258"/>
    </location>
    <ligand>
        <name>[4Fe-4S] cluster</name>
        <dbReference type="ChEBI" id="CHEBI:49883"/>
        <label>2</label>
        <note>4Fe-4S-substrate</note>
    </ligand>
</feature>
<feature type="binding site" evidence="1">
    <location>
        <position position="261"/>
    </location>
    <ligand>
        <name>[4Fe-4S] cluster</name>
        <dbReference type="ChEBI" id="CHEBI:49883"/>
        <label>2</label>
        <note>4Fe-4S-substrate</note>
    </ligand>
</feature>
<feature type="binding site" evidence="1">
    <location>
        <begin position="263"/>
        <end position="265"/>
    </location>
    <ligand>
        <name>GTP</name>
        <dbReference type="ChEBI" id="CHEBI:37565"/>
    </ligand>
</feature>
<feature type="binding site" evidence="1">
    <location>
        <position position="275"/>
    </location>
    <ligand>
        <name>[4Fe-4S] cluster</name>
        <dbReference type="ChEBI" id="CHEBI:49883"/>
        <label>2</label>
        <note>4Fe-4S-substrate</note>
    </ligand>
</feature>
<organism>
    <name type="scientific">Hydrogenovibrio crunogenus (strain DSM 25203 / XCL-2)</name>
    <name type="common">Thiomicrospira crunogena</name>
    <dbReference type="NCBI Taxonomy" id="317025"/>
    <lineage>
        <taxon>Bacteria</taxon>
        <taxon>Pseudomonadati</taxon>
        <taxon>Pseudomonadota</taxon>
        <taxon>Gammaproteobacteria</taxon>
        <taxon>Thiotrichales</taxon>
        <taxon>Piscirickettsiaceae</taxon>
        <taxon>Hydrogenovibrio</taxon>
    </lineage>
</organism>
<name>MOAA_HYDCU</name>
<comment type="function">
    <text evidence="1">Catalyzes the cyclization of GTP to (8S)-3',8-cyclo-7,8-dihydroguanosine 5'-triphosphate.</text>
</comment>
<comment type="catalytic activity">
    <reaction evidence="1">
        <text>GTP + AH2 + S-adenosyl-L-methionine = (8S)-3',8-cyclo-7,8-dihydroguanosine 5'-triphosphate + 5'-deoxyadenosine + L-methionine + A + H(+)</text>
        <dbReference type="Rhea" id="RHEA:49576"/>
        <dbReference type="ChEBI" id="CHEBI:13193"/>
        <dbReference type="ChEBI" id="CHEBI:15378"/>
        <dbReference type="ChEBI" id="CHEBI:17319"/>
        <dbReference type="ChEBI" id="CHEBI:17499"/>
        <dbReference type="ChEBI" id="CHEBI:37565"/>
        <dbReference type="ChEBI" id="CHEBI:57844"/>
        <dbReference type="ChEBI" id="CHEBI:59789"/>
        <dbReference type="ChEBI" id="CHEBI:131766"/>
        <dbReference type="EC" id="4.1.99.22"/>
    </reaction>
</comment>
<comment type="cofactor">
    <cofactor evidence="1">
        <name>[4Fe-4S] cluster</name>
        <dbReference type="ChEBI" id="CHEBI:49883"/>
    </cofactor>
    <text evidence="1">Binds 2 [4Fe-4S] clusters. Binds 1 [4Fe-4S] cluster coordinated with 3 cysteines and an exchangeable S-adenosyl-L-methionine and 1 [4Fe-4S] cluster coordinated with 3 cysteines and the GTP-derived substrate.</text>
</comment>
<comment type="pathway">
    <text evidence="1">Cofactor biosynthesis; molybdopterin biosynthesis.</text>
</comment>
<comment type="subunit">
    <text evidence="1">Monomer and homodimer.</text>
</comment>
<comment type="similarity">
    <text evidence="1">Belongs to the radical SAM superfamily. MoaA family.</text>
</comment>
<sequence length="331" mass="36566">MALIDPFNRKIDYLRVSVTDKCNYRCGYCMPEQGAHPEGRHTEYLDYDELARIIKAFVDLGVTKVRITGGEPLVRKGLPGFIEEIQPYEGLEEIALSTNAHHLDKHAVALKKAGLSRANVSIDSLQPEKFNKITRGGNLEKVLAGVDAGLAAGLNPIKFNMVVMKGTNDDEIEAMVDYGIEKGVEVRFIETMPIGEAGISLMDQHYPMEKIMARVRAHVGTDLIPATGKSHDGPSKNFHIKGTDAKIGVISAVSQHFCESCNRVRLTARGVLALCLGQEDSVDLRTPIREGISDEALKQMIVDAMLKKPEKHFFNENVHNIEFRQMVSLGG</sequence>
<reference key="1">
    <citation type="journal article" date="2006" name="PLoS Biol.">
        <title>The genome of deep-sea vent chemolithoautotroph Thiomicrospira crunogena XCL-2.</title>
        <authorList>
            <person name="Scott K.M."/>
            <person name="Sievert S.M."/>
            <person name="Abril F.N."/>
            <person name="Ball L.A."/>
            <person name="Barrett C.J."/>
            <person name="Blake R.A."/>
            <person name="Boller A.J."/>
            <person name="Chain P.S.G."/>
            <person name="Clark J.A."/>
            <person name="Davis C.R."/>
            <person name="Detter C."/>
            <person name="Do K.F."/>
            <person name="Dobrinski K.P."/>
            <person name="Faza B.I."/>
            <person name="Fitzpatrick K.A."/>
            <person name="Freyermuth S.K."/>
            <person name="Harmer T.L."/>
            <person name="Hauser L.J."/>
            <person name="Huegler M."/>
            <person name="Kerfeld C.A."/>
            <person name="Klotz M.G."/>
            <person name="Kong W.W."/>
            <person name="Land M."/>
            <person name="Lapidus A."/>
            <person name="Larimer F.W."/>
            <person name="Longo D.L."/>
            <person name="Lucas S."/>
            <person name="Malfatti S.A."/>
            <person name="Massey S.E."/>
            <person name="Martin D.D."/>
            <person name="McCuddin Z."/>
            <person name="Meyer F."/>
            <person name="Moore J.L."/>
            <person name="Ocampo L.H. Jr."/>
            <person name="Paul J.H."/>
            <person name="Paulsen I.T."/>
            <person name="Reep D.K."/>
            <person name="Ren Q."/>
            <person name="Ross R.L."/>
            <person name="Sato P.Y."/>
            <person name="Thomas P."/>
            <person name="Tinkham L.E."/>
            <person name="Zeruth G.T."/>
        </authorList>
    </citation>
    <scope>NUCLEOTIDE SEQUENCE [LARGE SCALE GENOMIC DNA]</scope>
    <source>
        <strain>DSM 25203 / XCL-2</strain>
    </source>
</reference>
<keyword id="KW-0004">4Fe-4S</keyword>
<keyword id="KW-0342">GTP-binding</keyword>
<keyword id="KW-0408">Iron</keyword>
<keyword id="KW-0411">Iron-sulfur</keyword>
<keyword id="KW-0456">Lyase</keyword>
<keyword id="KW-0479">Metal-binding</keyword>
<keyword id="KW-0501">Molybdenum cofactor biosynthesis</keyword>
<keyword id="KW-0547">Nucleotide-binding</keyword>
<keyword id="KW-0949">S-adenosyl-L-methionine</keyword>
<evidence type="ECO:0000255" key="1">
    <source>
        <dbReference type="HAMAP-Rule" id="MF_01225"/>
    </source>
</evidence>
<evidence type="ECO:0000255" key="2">
    <source>
        <dbReference type="PROSITE-ProRule" id="PRU01266"/>
    </source>
</evidence>
<protein>
    <recommendedName>
        <fullName evidence="1">GTP 3',8-cyclase</fullName>
        <ecNumber evidence="1">4.1.99.22</ecNumber>
    </recommendedName>
    <alternativeName>
        <fullName evidence="1">Molybdenum cofactor biosynthesis protein A</fullName>
    </alternativeName>
</protein>
<accession>Q31JB9</accession>
<dbReference type="EC" id="4.1.99.22" evidence="1"/>
<dbReference type="EMBL" id="CP000109">
    <property type="protein sequence ID" value="ABB40754.1"/>
    <property type="molecule type" value="Genomic_DNA"/>
</dbReference>
<dbReference type="SMR" id="Q31JB9"/>
<dbReference type="STRING" id="317025.Tcr_0158"/>
<dbReference type="KEGG" id="tcx:Tcr_0158"/>
<dbReference type="eggNOG" id="COG2896">
    <property type="taxonomic scope" value="Bacteria"/>
</dbReference>
<dbReference type="HOGENOM" id="CLU_009273_0_1_6"/>
<dbReference type="OrthoDB" id="9763993at2"/>
<dbReference type="UniPathway" id="UPA00344"/>
<dbReference type="GO" id="GO:0051539">
    <property type="term" value="F:4 iron, 4 sulfur cluster binding"/>
    <property type="evidence" value="ECO:0007669"/>
    <property type="project" value="UniProtKB-UniRule"/>
</dbReference>
<dbReference type="GO" id="GO:0061799">
    <property type="term" value="F:cyclic pyranopterin monophosphate synthase activity"/>
    <property type="evidence" value="ECO:0007669"/>
    <property type="project" value="TreeGrafter"/>
</dbReference>
<dbReference type="GO" id="GO:0061798">
    <property type="term" value="F:GTP 3',8'-cyclase activity"/>
    <property type="evidence" value="ECO:0007669"/>
    <property type="project" value="UniProtKB-UniRule"/>
</dbReference>
<dbReference type="GO" id="GO:0005525">
    <property type="term" value="F:GTP binding"/>
    <property type="evidence" value="ECO:0007669"/>
    <property type="project" value="UniProtKB-UniRule"/>
</dbReference>
<dbReference type="GO" id="GO:0046872">
    <property type="term" value="F:metal ion binding"/>
    <property type="evidence" value="ECO:0007669"/>
    <property type="project" value="UniProtKB-KW"/>
</dbReference>
<dbReference type="GO" id="GO:1904047">
    <property type="term" value="F:S-adenosyl-L-methionine binding"/>
    <property type="evidence" value="ECO:0007669"/>
    <property type="project" value="UniProtKB-UniRule"/>
</dbReference>
<dbReference type="GO" id="GO:0006777">
    <property type="term" value="P:Mo-molybdopterin cofactor biosynthetic process"/>
    <property type="evidence" value="ECO:0007669"/>
    <property type="project" value="UniProtKB-UniRule"/>
</dbReference>
<dbReference type="CDD" id="cd01335">
    <property type="entry name" value="Radical_SAM"/>
    <property type="match status" value="1"/>
</dbReference>
<dbReference type="CDD" id="cd21117">
    <property type="entry name" value="Twitch_MoaA"/>
    <property type="match status" value="1"/>
</dbReference>
<dbReference type="Gene3D" id="3.20.20.70">
    <property type="entry name" value="Aldolase class I"/>
    <property type="match status" value="1"/>
</dbReference>
<dbReference type="HAMAP" id="MF_01225_B">
    <property type="entry name" value="MoaA_B"/>
    <property type="match status" value="1"/>
</dbReference>
<dbReference type="InterPro" id="IPR013785">
    <property type="entry name" value="Aldolase_TIM"/>
</dbReference>
<dbReference type="InterPro" id="IPR006638">
    <property type="entry name" value="Elp3/MiaA/NifB-like_rSAM"/>
</dbReference>
<dbReference type="InterPro" id="IPR013483">
    <property type="entry name" value="MoaA"/>
</dbReference>
<dbReference type="InterPro" id="IPR010505">
    <property type="entry name" value="MoaA_twitch"/>
</dbReference>
<dbReference type="InterPro" id="IPR050105">
    <property type="entry name" value="MoCo_biosynth_MoaA/MoaC"/>
</dbReference>
<dbReference type="InterPro" id="IPR007197">
    <property type="entry name" value="rSAM"/>
</dbReference>
<dbReference type="NCBIfam" id="TIGR02666">
    <property type="entry name" value="moaA"/>
    <property type="match status" value="1"/>
</dbReference>
<dbReference type="NCBIfam" id="NF001199">
    <property type="entry name" value="PRK00164.2-1"/>
    <property type="match status" value="1"/>
</dbReference>
<dbReference type="PANTHER" id="PTHR22960:SF0">
    <property type="entry name" value="MOLYBDENUM COFACTOR BIOSYNTHESIS PROTEIN 1"/>
    <property type="match status" value="1"/>
</dbReference>
<dbReference type="PANTHER" id="PTHR22960">
    <property type="entry name" value="MOLYBDOPTERIN COFACTOR SYNTHESIS PROTEIN A"/>
    <property type="match status" value="1"/>
</dbReference>
<dbReference type="Pfam" id="PF06463">
    <property type="entry name" value="Mob_synth_C"/>
    <property type="match status" value="1"/>
</dbReference>
<dbReference type="Pfam" id="PF04055">
    <property type="entry name" value="Radical_SAM"/>
    <property type="match status" value="1"/>
</dbReference>
<dbReference type="SFLD" id="SFLDG01383">
    <property type="entry name" value="cyclic_pyranopterin_phosphate"/>
    <property type="match status" value="1"/>
</dbReference>
<dbReference type="SFLD" id="SFLDG01216">
    <property type="entry name" value="thioether_bond_formation_requi"/>
    <property type="match status" value="1"/>
</dbReference>
<dbReference type="SMART" id="SM00729">
    <property type="entry name" value="Elp3"/>
    <property type="match status" value="1"/>
</dbReference>
<dbReference type="SUPFAM" id="SSF102114">
    <property type="entry name" value="Radical SAM enzymes"/>
    <property type="match status" value="1"/>
</dbReference>
<dbReference type="PROSITE" id="PS51918">
    <property type="entry name" value="RADICAL_SAM"/>
    <property type="match status" value="1"/>
</dbReference>